<feature type="chain" id="PRO_0000218506" description="Regulatory protein MsrR">
    <location>
        <begin position="1"/>
        <end position="327"/>
    </location>
</feature>
<feature type="topological domain" description="Cytoplasmic" evidence="2">
    <location>
        <begin position="1"/>
        <end position="31"/>
    </location>
</feature>
<feature type="transmembrane region" description="Helical; Signal-anchor for type II membrane protein" evidence="2">
    <location>
        <begin position="32"/>
        <end position="52"/>
    </location>
</feature>
<feature type="topological domain" description="Extracellular" evidence="2">
    <location>
        <begin position="53"/>
        <end position="327"/>
    </location>
</feature>
<feature type="region of interest" description="Disordered" evidence="3">
    <location>
        <begin position="1"/>
        <end position="24"/>
    </location>
</feature>
<feature type="compositionally biased region" description="Basic and acidic residues" evidence="3">
    <location>
        <begin position="1"/>
        <end position="18"/>
    </location>
</feature>
<proteinExistence type="inferred from homology"/>
<keyword id="KW-1003">Cell membrane</keyword>
<keyword id="KW-0472">Membrane</keyword>
<keyword id="KW-0735">Signal-anchor</keyword>
<keyword id="KW-0804">Transcription</keyword>
<keyword id="KW-0805">Transcription regulation</keyword>
<keyword id="KW-0812">Transmembrane</keyword>
<keyword id="KW-1133">Transmembrane helix</keyword>
<evidence type="ECO:0000250" key="1"/>
<evidence type="ECO:0000255" key="2"/>
<evidence type="ECO:0000256" key="3">
    <source>
        <dbReference type="SAM" id="MobiDB-lite"/>
    </source>
</evidence>
<evidence type="ECO:0000305" key="4"/>
<sequence length="327" mass="36971">MDKETNDNEYRRQSEHRTSAPKRKKKKKIRKLPIILLIVVILLIALVVYIVHSYNSGVEYAKKHAKDVKVHQFNGPVKNDGKISILVLGADKAQGGQSRTDSIMVVQYDFINKKMKMMSVMRDIYADIPGYGKHKINSAYALGGPELLRKTLDKNLGINPEYYAVVDFTGFEKMIDELMPEGVPINVEKDMSKNIGVSLKKGNHRLNGKELLGYARFRHDPEGDFGRVRRQQQVMQTLKKEMVNFRTVVKLPKVAGILRGYVNTNIPDSGIFQTGLSFGIRGEKDVKSLTVPIKNSYEDVNTNTDGSALQINKNTNKQAIKDFLDED</sequence>
<gene>
    <name type="primary">msrR</name>
    <name type="ordered locus">SAS1302</name>
</gene>
<name>MSRR_STAAS</name>
<reference key="1">
    <citation type="journal article" date="2004" name="Proc. Natl. Acad. Sci. U.S.A.">
        <title>Complete genomes of two clinical Staphylococcus aureus strains: evidence for the rapid evolution of virulence and drug resistance.</title>
        <authorList>
            <person name="Holden M.T.G."/>
            <person name="Feil E.J."/>
            <person name="Lindsay J.A."/>
            <person name="Peacock S.J."/>
            <person name="Day N.P.J."/>
            <person name="Enright M.C."/>
            <person name="Foster T.J."/>
            <person name="Moore C.E."/>
            <person name="Hurst L."/>
            <person name="Atkin R."/>
            <person name="Barron A."/>
            <person name="Bason N."/>
            <person name="Bentley S.D."/>
            <person name="Chillingworth C."/>
            <person name="Chillingworth T."/>
            <person name="Churcher C."/>
            <person name="Clark L."/>
            <person name="Corton C."/>
            <person name="Cronin A."/>
            <person name="Doggett J."/>
            <person name="Dowd L."/>
            <person name="Feltwell T."/>
            <person name="Hance Z."/>
            <person name="Harris B."/>
            <person name="Hauser H."/>
            <person name="Holroyd S."/>
            <person name="Jagels K."/>
            <person name="James K.D."/>
            <person name="Lennard N."/>
            <person name="Line A."/>
            <person name="Mayes R."/>
            <person name="Moule S."/>
            <person name="Mungall K."/>
            <person name="Ormond D."/>
            <person name="Quail M.A."/>
            <person name="Rabbinowitsch E."/>
            <person name="Rutherford K.M."/>
            <person name="Sanders M."/>
            <person name="Sharp S."/>
            <person name="Simmonds M."/>
            <person name="Stevens K."/>
            <person name="Whitehead S."/>
            <person name="Barrell B.G."/>
            <person name="Spratt B.G."/>
            <person name="Parkhill J."/>
        </authorList>
    </citation>
    <scope>NUCLEOTIDE SEQUENCE [LARGE SCALE GENOMIC DNA]</scope>
    <source>
        <strain>MSSA476</strain>
    </source>
</reference>
<dbReference type="EMBL" id="BX571857">
    <property type="protein sequence ID" value="CAG43079.1"/>
    <property type="molecule type" value="Genomic_DNA"/>
</dbReference>
<dbReference type="RefSeq" id="WP_000356975.1">
    <property type="nucleotide sequence ID" value="NC_002953.3"/>
</dbReference>
<dbReference type="SMR" id="Q6G9J7"/>
<dbReference type="KEGG" id="sas:SAS1302"/>
<dbReference type="HOGENOM" id="CLU_016455_1_0_9"/>
<dbReference type="GO" id="GO:0005886">
    <property type="term" value="C:plasma membrane"/>
    <property type="evidence" value="ECO:0007669"/>
    <property type="project" value="UniProtKB-SubCell"/>
</dbReference>
<dbReference type="Gene3D" id="3.40.630.190">
    <property type="entry name" value="LCP protein"/>
    <property type="match status" value="1"/>
</dbReference>
<dbReference type="InterPro" id="IPR050922">
    <property type="entry name" value="LytR/CpsA/Psr_CW_biosynth"/>
</dbReference>
<dbReference type="InterPro" id="IPR004474">
    <property type="entry name" value="LytR_CpsA_psr"/>
</dbReference>
<dbReference type="NCBIfam" id="TIGR00350">
    <property type="entry name" value="lytR_cpsA_psr"/>
    <property type="match status" value="1"/>
</dbReference>
<dbReference type="PANTHER" id="PTHR33392">
    <property type="entry name" value="POLYISOPRENYL-TEICHOIC ACID--PEPTIDOGLYCAN TEICHOIC ACID TRANSFERASE TAGU"/>
    <property type="match status" value="1"/>
</dbReference>
<dbReference type="PANTHER" id="PTHR33392:SF8">
    <property type="entry name" value="REGULATORY PROTEIN MSRR"/>
    <property type="match status" value="1"/>
</dbReference>
<dbReference type="Pfam" id="PF03816">
    <property type="entry name" value="LytR_cpsA_psr"/>
    <property type="match status" value="1"/>
</dbReference>
<organism>
    <name type="scientific">Staphylococcus aureus (strain MSSA476)</name>
    <dbReference type="NCBI Taxonomy" id="282459"/>
    <lineage>
        <taxon>Bacteria</taxon>
        <taxon>Bacillati</taxon>
        <taxon>Bacillota</taxon>
        <taxon>Bacilli</taxon>
        <taxon>Bacillales</taxon>
        <taxon>Staphylococcaceae</taxon>
        <taxon>Staphylococcus</taxon>
    </lineage>
</organism>
<comment type="function">
    <text evidence="1">Involved in SarA attenuation. Affects resistance to oxacillin and teicoplanin, as well as the synthesis of virulence factors (By similarity).</text>
</comment>
<comment type="subcellular location">
    <subcellularLocation>
        <location evidence="4">Cell membrane</location>
        <topology evidence="4">Single-pass type II membrane protein</topology>
    </subcellularLocation>
</comment>
<comment type="similarity">
    <text evidence="4">Belongs to the LytR/CpsA/Psr (LCP) family.</text>
</comment>
<protein>
    <recommendedName>
        <fullName>Regulatory protein MsrR</fullName>
    </recommendedName>
</protein>
<accession>Q6G9J7</accession>